<protein>
    <recommendedName>
        <fullName evidence="1">Multifunctional CCA protein</fullName>
    </recommendedName>
    <domain>
        <recommendedName>
            <fullName evidence="1">CCA-adding enzyme</fullName>
            <ecNumber evidence="1">2.7.7.72</ecNumber>
        </recommendedName>
        <alternativeName>
            <fullName evidence="1">CCA tRNA nucleotidyltransferase</fullName>
        </alternativeName>
        <alternativeName>
            <fullName evidence="1">tRNA CCA-pyrophosphorylase</fullName>
        </alternativeName>
        <alternativeName>
            <fullName evidence="1">tRNA adenylyl-/cytidylyl-transferase</fullName>
        </alternativeName>
        <alternativeName>
            <fullName evidence="1">tRNA nucleotidyltransferase</fullName>
        </alternativeName>
        <alternativeName>
            <fullName evidence="1">tRNA-NT</fullName>
        </alternativeName>
    </domain>
    <domain>
        <recommendedName>
            <fullName evidence="1">2'-nucleotidase</fullName>
            <ecNumber evidence="1">3.1.3.-</ecNumber>
        </recommendedName>
    </domain>
    <domain>
        <recommendedName>
            <fullName evidence="1">2',3'-cyclic phosphodiesterase</fullName>
            <ecNumber evidence="1">3.1.4.-</ecNumber>
        </recommendedName>
    </domain>
    <domain>
        <recommendedName>
            <fullName evidence="1">Phosphatase</fullName>
            <ecNumber evidence="1">3.1.3.-</ecNumber>
        </recommendedName>
    </domain>
</protein>
<feature type="chain" id="PRO_1000067287" description="Multifunctional CCA protein">
    <location>
        <begin position="1"/>
        <end position="413"/>
    </location>
</feature>
<feature type="domain" description="HD" evidence="1">
    <location>
        <begin position="228"/>
        <end position="329"/>
    </location>
</feature>
<feature type="binding site" evidence="1">
    <location>
        <position position="8"/>
    </location>
    <ligand>
        <name>ATP</name>
        <dbReference type="ChEBI" id="CHEBI:30616"/>
    </ligand>
</feature>
<feature type="binding site" evidence="1">
    <location>
        <position position="8"/>
    </location>
    <ligand>
        <name>CTP</name>
        <dbReference type="ChEBI" id="CHEBI:37563"/>
    </ligand>
</feature>
<feature type="binding site" evidence="1">
    <location>
        <position position="11"/>
    </location>
    <ligand>
        <name>ATP</name>
        <dbReference type="ChEBI" id="CHEBI:30616"/>
    </ligand>
</feature>
<feature type="binding site" evidence="1">
    <location>
        <position position="11"/>
    </location>
    <ligand>
        <name>CTP</name>
        <dbReference type="ChEBI" id="CHEBI:37563"/>
    </ligand>
</feature>
<feature type="binding site" evidence="1">
    <location>
        <position position="21"/>
    </location>
    <ligand>
        <name>Mg(2+)</name>
        <dbReference type="ChEBI" id="CHEBI:18420"/>
    </ligand>
</feature>
<feature type="binding site" evidence="1">
    <location>
        <position position="23"/>
    </location>
    <ligand>
        <name>Mg(2+)</name>
        <dbReference type="ChEBI" id="CHEBI:18420"/>
    </ligand>
</feature>
<feature type="binding site" evidence="1">
    <location>
        <position position="91"/>
    </location>
    <ligand>
        <name>ATP</name>
        <dbReference type="ChEBI" id="CHEBI:30616"/>
    </ligand>
</feature>
<feature type="binding site" evidence="1">
    <location>
        <position position="91"/>
    </location>
    <ligand>
        <name>CTP</name>
        <dbReference type="ChEBI" id="CHEBI:37563"/>
    </ligand>
</feature>
<feature type="binding site" evidence="1">
    <location>
        <position position="137"/>
    </location>
    <ligand>
        <name>ATP</name>
        <dbReference type="ChEBI" id="CHEBI:30616"/>
    </ligand>
</feature>
<feature type="binding site" evidence="1">
    <location>
        <position position="137"/>
    </location>
    <ligand>
        <name>CTP</name>
        <dbReference type="ChEBI" id="CHEBI:37563"/>
    </ligand>
</feature>
<feature type="binding site" evidence="1">
    <location>
        <position position="140"/>
    </location>
    <ligand>
        <name>ATP</name>
        <dbReference type="ChEBI" id="CHEBI:30616"/>
    </ligand>
</feature>
<feature type="binding site" evidence="1">
    <location>
        <position position="140"/>
    </location>
    <ligand>
        <name>CTP</name>
        <dbReference type="ChEBI" id="CHEBI:37563"/>
    </ligand>
</feature>
<accession>A4WEI8</accession>
<sequence length="413" mass="46433">MKIYLVGGAVRDALLGLPVKDKDWVVVGATPEEMLNAGYQQVGRDFPVFLHPKTREEYALARTERKAGLGYTGFTCYAAPDVTLEQDLLRRDLTINALAQDDEGHIIDAYGGKRDLQNRLLRHVSPAFSEDPLRVLRVARFAARYAHLSFRIADETLALMTAMTAAGELEHLTPERVWKETENALTTRNPQVFFQVLRDCGALKVLFPEIDALFGVPAPAKWHPEIDTGIHTLMTLSMAAMLSPEVDVRFATLCHDLGKGLTPKEFWPRHHGHGPAGVKLVEGICQRLRVPNDIRDLAKLVAEFHDLIHTFPILKPATIVKLFDNIDAWRKPQRVEQIALTSEADVRGRTGFEACDYSQGRLLREAWEIAKAVPTKDVVEAGFKGPEIREELTKRRVQAVADWKEKRCPQPKD</sequence>
<proteinExistence type="inferred from homology"/>
<evidence type="ECO:0000255" key="1">
    <source>
        <dbReference type="HAMAP-Rule" id="MF_01261"/>
    </source>
</evidence>
<comment type="function">
    <text evidence="1">Catalyzes the addition and repair of the essential 3'-terminal CCA sequence in tRNAs without using a nucleic acid template. Adds these three nucleotides in the order of C, C, and A to the tRNA nucleotide-73, using CTP and ATP as substrates and producing inorganic pyrophosphate. tRNA 3'-terminal CCA addition is required both for tRNA processing and repair. Also involved in tRNA surveillance by mediating tandem CCA addition to generate a CCACCA at the 3' terminus of unstable tRNAs. While stable tRNAs receive only 3'-terminal CCA, unstable tRNAs are marked with CCACCA and rapidly degraded.</text>
</comment>
<comment type="catalytic activity">
    <reaction evidence="1">
        <text>a tRNA precursor + 2 CTP + ATP = a tRNA with a 3' CCA end + 3 diphosphate</text>
        <dbReference type="Rhea" id="RHEA:14433"/>
        <dbReference type="Rhea" id="RHEA-COMP:10465"/>
        <dbReference type="Rhea" id="RHEA-COMP:10468"/>
        <dbReference type="ChEBI" id="CHEBI:30616"/>
        <dbReference type="ChEBI" id="CHEBI:33019"/>
        <dbReference type="ChEBI" id="CHEBI:37563"/>
        <dbReference type="ChEBI" id="CHEBI:74896"/>
        <dbReference type="ChEBI" id="CHEBI:83071"/>
        <dbReference type="EC" id="2.7.7.72"/>
    </reaction>
</comment>
<comment type="catalytic activity">
    <reaction evidence="1">
        <text>a tRNA with a 3' CCA end + 2 CTP + ATP = a tRNA with a 3' CCACCA end + 3 diphosphate</text>
        <dbReference type="Rhea" id="RHEA:76235"/>
        <dbReference type="Rhea" id="RHEA-COMP:10468"/>
        <dbReference type="Rhea" id="RHEA-COMP:18655"/>
        <dbReference type="ChEBI" id="CHEBI:30616"/>
        <dbReference type="ChEBI" id="CHEBI:33019"/>
        <dbReference type="ChEBI" id="CHEBI:37563"/>
        <dbReference type="ChEBI" id="CHEBI:83071"/>
        <dbReference type="ChEBI" id="CHEBI:195187"/>
    </reaction>
    <physiologicalReaction direction="left-to-right" evidence="1">
        <dbReference type="Rhea" id="RHEA:76236"/>
    </physiologicalReaction>
</comment>
<comment type="cofactor">
    <cofactor evidence="1">
        <name>Mg(2+)</name>
        <dbReference type="ChEBI" id="CHEBI:18420"/>
    </cofactor>
    <text evidence="1">Magnesium is required for nucleotidyltransferase activity.</text>
</comment>
<comment type="cofactor">
    <cofactor evidence="1">
        <name>Ni(2+)</name>
        <dbReference type="ChEBI" id="CHEBI:49786"/>
    </cofactor>
    <text evidence="1">Nickel for phosphatase activity.</text>
</comment>
<comment type="subunit">
    <text evidence="1">Monomer. Can also form homodimers and oligomers.</text>
</comment>
<comment type="domain">
    <text evidence="1">Comprises two domains: an N-terminal domain containing the nucleotidyltransferase activity and a C-terminal HD domain associated with both phosphodiesterase and phosphatase activities.</text>
</comment>
<comment type="miscellaneous">
    <text evidence="1">A single active site specifically recognizes both ATP and CTP and is responsible for their addition.</text>
</comment>
<comment type="similarity">
    <text evidence="1">Belongs to the tRNA nucleotidyltransferase/poly(A) polymerase family. Bacterial CCA-adding enzyme type 1 subfamily.</text>
</comment>
<reference key="1">
    <citation type="journal article" date="2010" name="PLoS Genet.">
        <title>Genome sequence of the plant growth promoting endophytic bacterium Enterobacter sp. 638.</title>
        <authorList>
            <person name="Taghavi S."/>
            <person name="van der Lelie D."/>
            <person name="Hoffman A."/>
            <person name="Zhang Y.B."/>
            <person name="Walla M.D."/>
            <person name="Vangronsveld J."/>
            <person name="Newman L."/>
            <person name="Monchy S."/>
        </authorList>
    </citation>
    <scope>NUCLEOTIDE SEQUENCE [LARGE SCALE GENOMIC DNA]</scope>
    <source>
        <strain>638</strain>
    </source>
</reference>
<keyword id="KW-0067">ATP-binding</keyword>
<keyword id="KW-0378">Hydrolase</keyword>
<keyword id="KW-0460">Magnesium</keyword>
<keyword id="KW-0479">Metal-binding</keyword>
<keyword id="KW-0511">Multifunctional enzyme</keyword>
<keyword id="KW-0533">Nickel</keyword>
<keyword id="KW-0547">Nucleotide-binding</keyword>
<keyword id="KW-0548">Nucleotidyltransferase</keyword>
<keyword id="KW-0692">RNA repair</keyword>
<keyword id="KW-0694">RNA-binding</keyword>
<keyword id="KW-0808">Transferase</keyword>
<keyword id="KW-0819">tRNA processing</keyword>
<gene>
    <name evidence="1" type="primary">cca</name>
    <name type="ordered locus">Ent638_3459</name>
</gene>
<name>CCA_ENT38</name>
<organism>
    <name type="scientific">Enterobacter sp. (strain 638)</name>
    <dbReference type="NCBI Taxonomy" id="399742"/>
    <lineage>
        <taxon>Bacteria</taxon>
        <taxon>Pseudomonadati</taxon>
        <taxon>Pseudomonadota</taxon>
        <taxon>Gammaproteobacteria</taxon>
        <taxon>Enterobacterales</taxon>
        <taxon>Enterobacteriaceae</taxon>
        <taxon>Enterobacter</taxon>
    </lineage>
</organism>
<dbReference type="EC" id="2.7.7.72" evidence="1"/>
<dbReference type="EC" id="3.1.3.-" evidence="1"/>
<dbReference type="EC" id="3.1.4.-" evidence="1"/>
<dbReference type="EMBL" id="CP000653">
    <property type="protein sequence ID" value="ABP62118.1"/>
    <property type="molecule type" value="Genomic_DNA"/>
</dbReference>
<dbReference type="RefSeq" id="WP_015960446.1">
    <property type="nucleotide sequence ID" value="NC_009436.1"/>
</dbReference>
<dbReference type="SMR" id="A4WEI8"/>
<dbReference type="STRING" id="399742.Ent638_3459"/>
<dbReference type="KEGG" id="ent:Ent638_3459"/>
<dbReference type="eggNOG" id="COG0617">
    <property type="taxonomic scope" value="Bacteria"/>
</dbReference>
<dbReference type="HOGENOM" id="CLU_015961_1_1_6"/>
<dbReference type="OrthoDB" id="9805698at2"/>
<dbReference type="Proteomes" id="UP000000230">
    <property type="component" value="Chromosome"/>
</dbReference>
<dbReference type="GO" id="GO:0005524">
    <property type="term" value="F:ATP binding"/>
    <property type="evidence" value="ECO:0007669"/>
    <property type="project" value="UniProtKB-UniRule"/>
</dbReference>
<dbReference type="GO" id="GO:0004810">
    <property type="term" value="F:CCA tRNA nucleotidyltransferase activity"/>
    <property type="evidence" value="ECO:0007669"/>
    <property type="project" value="UniProtKB-UniRule"/>
</dbReference>
<dbReference type="GO" id="GO:0004112">
    <property type="term" value="F:cyclic-nucleotide phosphodiesterase activity"/>
    <property type="evidence" value="ECO:0007669"/>
    <property type="project" value="UniProtKB-UniRule"/>
</dbReference>
<dbReference type="GO" id="GO:0000287">
    <property type="term" value="F:magnesium ion binding"/>
    <property type="evidence" value="ECO:0007669"/>
    <property type="project" value="UniProtKB-UniRule"/>
</dbReference>
<dbReference type="GO" id="GO:0016791">
    <property type="term" value="F:phosphatase activity"/>
    <property type="evidence" value="ECO:0007669"/>
    <property type="project" value="UniProtKB-UniRule"/>
</dbReference>
<dbReference type="GO" id="GO:0000049">
    <property type="term" value="F:tRNA binding"/>
    <property type="evidence" value="ECO:0007669"/>
    <property type="project" value="UniProtKB-UniRule"/>
</dbReference>
<dbReference type="GO" id="GO:0042245">
    <property type="term" value="P:RNA repair"/>
    <property type="evidence" value="ECO:0007669"/>
    <property type="project" value="UniProtKB-KW"/>
</dbReference>
<dbReference type="GO" id="GO:0001680">
    <property type="term" value="P:tRNA 3'-terminal CCA addition"/>
    <property type="evidence" value="ECO:0007669"/>
    <property type="project" value="UniProtKB-UniRule"/>
</dbReference>
<dbReference type="CDD" id="cd00077">
    <property type="entry name" value="HDc"/>
    <property type="match status" value="1"/>
</dbReference>
<dbReference type="CDD" id="cd05398">
    <property type="entry name" value="NT_ClassII-CCAase"/>
    <property type="match status" value="1"/>
</dbReference>
<dbReference type="FunFam" id="1.10.3090.10:FF:000001">
    <property type="entry name" value="Multifunctional CCA protein"/>
    <property type="match status" value="1"/>
</dbReference>
<dbReference type="FunFam" id="3.30.460.10:FF:000016">
    <property type="entry name" value="Multifunctional CCA protein"/>
    <property type="match status" value="1"/>
</dbReference>
<dbReference type="Gene3D" id="3.30.460.10">
    <property type="entry name" value="Beta Polymerase, domain 2"/>
    <property type="match status" value="1"/>
</dbReference>
<dbReference type="Gene3D" id="1.10.3090.10">
    <property type="entry name" value="cca-adding enzyme, domain 2"/>
    <property type="match status" value="1"/>
</dbReference>
<dbReference type="HAMAP" id="MF_01261">
    <property type="entry name" value="CCA_bact_type1"/>
    <property type="match status" value="1"/>
</dbReference>
<dbReference type="HAMAP" id="MF_01262">
    <property type="entry name" value="CCA_bact_type2"/>
    <property type="match status" value="1"/>
</dbReference>
<dbReference type="InterPro" id="IPR012006">
    <property type="entry name" value="CCA_bact"/>
</dbReference>
<dbReference type="InterPro" id="IPR003607">
    <property type="entry name" value="HD/PDEase_dom"/>
</dbReference>
<dbReference type="InterPro" id="IPR006674">
    <property type="entry name" value="HD_domain"/>
</dbReference>
<dbReference type="InterPro" id="IPR043519">
    <property type="entry name" value="NT_sf"/>
</dbReference>
<dbReference type="InterPro" id="IPR002646">
    <property type="entry name" value="PolA_pol_head_dom"/>
</dbReference>
<dbReference type="InterPro" id="IPR032828">
    <property type="entry name" value="PolyA_RNA-bd"/>
</dbReference>
<dbReference type="InterPro" id="IPR050124">
    <property type="entry name" value="tRNA_CCA-adding_enzyme"/>
</dbReference>
<dbReference type="NCBIfam" id="NF008137">
    <property type="entry name" value="PRK10885.1"/>
    <property type="match status" value="1"/>
</dbReference>
<dbReference type="PANTHER" id="PTHR47545">
    <property type="entry name" value="MULTIFUNCTIONAL CCA PROTEIN"/>
    <property type="match status" value="1"/>
</dbReference>
<dbReference type="PANTHER" id="PTHR47545:SF1">
    <property type="entry name" value="MULTIFUNCTIONAL CCA PROTEIN"/>
    <property type="match status" value="1"/>
</dbReference>
<dbReference type="Pfam" id="PF01966">
    <property type="entry name" value="HD"/>
    <property type="match status" value="1"/>
</dbReference>
<dbReference type="Pfam" id="PF01743">
    <property type="entry name" value="PolyA_pol"/>
    <property type="match status" value="1"/>
</dbReference>
<dbReference type="Pfam" id="PF12627">
    <property type="entry name" value="PolyA_pol_RNAbd"/>
    <property type="match status" value="1"/>
</dbReference>
<dbReference type="PIRSF" id="PIRSF000813">
    <property type="entry name" value="CCA_bact"/>
    <property type="match status" value="1"/>
</dbReference>
<dbReference type="SMART" id="SM00471">
    <property type="entry name" value="HDc"/>
    <property type="match status" value="1"/>
</dbReference>
<dbReference type="SUPFAM" id="SSF81301">
    <property type="entry name" value="Nucleotidyltransferase"/>
    <property type="match status" value="1"/>
</dbReference>
<dbReference type="SUPFAM" id="SSF81891">
    <property type="entry name" value="Poly A polymerase C-terminal region-like"/>
    <property type="match status" value="1"/>
</dbReference>
<dbReference type="PROSITE" id="PS51831">
    <property type="entry name" value="HD"/>
    <property type="match status" value="1"/>
</dbReference>